<dbReference type="EMBL" id="AC005191">
    <property type="status" value="NOT_ANNOTATED_CDS"/>
    <property type="molecule type" value="Genomic_DNA"/>
</dbReference>
<dbReference type="EMBL" id="CH471120">
    <property type="protein sequence ID" value="EAX02631.1"/>
    <property type="molecule type" value="Genomic_DNA"/>
</dbReference>
<dbReference type="EMBL" id="BC034811">
    <property type="status" value="NOT_ANNOTATED_CDS"/>
    <property type="molecule type" value="mRNA"/>
</dbReference>
<dbReference type="CCDS" id="CCDS83485.1"/>
<dbReference type="RefSeq" id="NP_001182505.1">
    <property type="nucleotide sequence ID" value="NM_001195576.1"/>
</dbReference>
<dbReference type="RefSeq" id="NP_001182506.1">
    <property type="nucleotide sequence ID" value="NM_001195577.2"/>
</dbReference>
<dbReference type="RefSeq" id="NP_001182507.1">
    <property type="nucleotide sequence ID" value="NM_001195578.2"/>
</dbReference>
<dbReference type="RefSeq" id="XP_011529140.1">
    <property type="nucleotide sequence ID" value="XM_011530838.2"/>
</dbReference>
<dbReference type="SMR" id="A6NMA1"/>
<dbReference type="BioGRID" id="1147683">
    <property type="interactions" value="1"/>
</dbReference>
<dbReference type="PhosphoSitePlus" id="A6NMA1"/>
<dbReference type="BioMuta" id="TRPC5OS"/>
<dbReference type="MassIVE" id="A6NMA1"/>
<dbReference type="PeptideAtlas" id="A6NMA1"/>
<dbReference type="DNASU" id="100329135"/>
<dbReference type="Ensembl" id="ENST00000371970.2">
    <property type="protein sequence ID" value="ENSP00000490135.1"/>
    <property type="gene ID" value="ENSG00000204025.8"/>
</dbReference>
<dbReference type="Ensembl" id="ENST00000612026.5">
    <property type="protein sequence ID" value="ENSP00000490633.1"/>
    <property type="gene ID" value="ENSG00000204025.8"/>
</dbReference>
<dbReference type="Ensembl" id="ENST00000635763.2">
    <property type="protein sequence ID" value="ENSP00000490533.1"/>
    <property type="gene ID" value="ENSG00000204025.8"/>
</dbReference>
<dbReference type="GeneID" id="100329135"/>
<dbReference type="KEGG" id="hsa:100329135"/>
<dbReference type="MANE-Select" id="ENST00000635763.2">
    <property type="protein sequence ID" value="ENSP00000490533.1"/>
    <property type="RefSeq nucleotide sequence ID" value="NM_001195578.2"/>
    <property type="RefSeq protein sequence ID" value="NP_001182507.1"/>
</dbReference>
<dbReference type="AGR" id="HGNC:40593"/>
<dbReference type="CTD" id="100329135"/>
<dbReference type="DisGeNET" id="100329135"/>
<dbReference type="GeneCards" id="TRPC5OS"/>
<dbReference type="HGNC" id="HGNC:40593">
    <property type="gene designation" value="TRPC5OS"/>
</dbReference>
<dbReference type="HPA" id="ENSG00000204025">
    <property type="expression patterns" value="Tissue enriched (testis)"/>
</dbReference>
<dbReference type="neXtProt" id="NX_A6NMA1"/>
<dbReference type="OpenTargets" id="ENSG00000204025"/>
<dbReference type="VEuPathDB" id="HostDB:ENSG00000204025"/>
<dbReference type="GeneTree" id="ENSGT00390000018248"/>
<dbReference type="InParanoid" id="A6NMA1"/>
<dbReference type="OMA" id="AREQMPC"/>
<dbReference type="OrthoDB" id="9836436at2759"/>
<dbReference type="PAN-GO" id="A6NMA1">
    <property type="GO annotations" value="0 GO annotations based on evolutionary models"/>
</dbReference>
<dbReference type="PhylomeDB" id="A6NMA1"/>
<dbReference type="PathwayCommons" id="A6NMA1"/>
<dbReference type="BioGRID-ORCS" id="100329135">
    <property type="hits" value="12 hits in 243 CRISPR screens"/>
</dbReference>
<dbReference type="Pharos" id="A6NMA1">
    <property type="development level" value="Tdark"/>
</dbReference>
<dbReference type="PRO" id="PR:A6NMA1"/>
<dbReference type="Proteomes" id="UP000005640">
    <property type="component" value="Chromosome X"/>
</dbReference>
<dbReference type="RNAct" id="A6NMA1">
    <property type="molecule type" value="protein"/>
</dbReference>
<dbReference type="Bgee" id="ENSG00000204025">
    <property type="expression patterns" value="Expressed in right testis and 36 other cell types or tissues"/>
</dbReference>
<reference key="1">
    <citation type="journal article" date="2005" name="Nature">
        <title>The DNA sequence of the human X chromosome.</title>
        <authorList>
            <person name="Ross M.T."/>
            <person name="Grafham D.V."/>
            <person name="Coffey A.J."/>
            <person name="Scherer S."/>
            <person name="McLay K."/>
            <person name="Muzny D."/>
            <person name="Platzer M."/>
            <person name="Howell G.R."/>
            <person name="Burrows C."/>
            <person name="Bird C.P."/>
            <person name="Frankish A."/>
            <person name="Lovell F.L."/>
            <person name="Howe K.L."/>
            <person name="Ashurst J.L."/>
            <person name="Fulton R.S."/>
            <person name="Sudbrak R."/>
            <person name="Wen G."/>
            <person name="Jones M.C."/>
            <person name="Hurles M.E."/>
            <person name="Andrews T.D."/>
            <person name="Scott C.E."/>
            <person name="Searle S."/>
            <person name="Ramser J."/>
            <person name="Whittaker A."/>
            <person name="Deadman R."/>
            <person name="Carter N.P."/>
            <person name="Hunt S.E."/>
            <person name="Chen R."/>
            <person name="Cree A."/>
            <person name="Gunaratne P."/>
            <person name="Havlak P."/>
            <person name="Hodgson A."/>
            <person name="Metzker M.L."/>
            <person name="Richards S."/>
            <person name="Scott G."/>
            <person name="Steffen D."/>
            <person name="Sodergren E."/>
            <person name="Wheeler D.A."/>
            <person name="Worley K.C."/>
            <person name="Ainscough R."/>
            <person name="Ambrose K.D."/>
            <person name="Ansari-Lari M.A."/>
            <person name="Aradhya S."/>
            <person name="Ashwell R.I."/>
            <person name="Babbage A.K."/>
            <person name="Bagguley C.L."/>
            <person name="Ballabio A."/>
            <person name="Banerjee R."/>
            <person name="Barker G.E."/>
            <person name="Barlow K.F."/>
            <person name="Barrett I.P."/>
            <person name="Bates K.N."/>
            <person name="Beare D.M."/>
            <person name="Beasley H."/>
            <person name="Beasley O."/>
            <person name="Beck A."/>
            <person name="Bethel G."/>
            <person name="Blechschmidt K."/>
            <person name="Brady N."/>
            <person name="Bray-Allen S."/>
            <person name="Bridgeman A.M."/>
            <person name="Brown A.J."/>
            <person name="Brown M.J."/>
            <person name="Bonnin D."/>
            <person name="Bruford E.A."/>
            <person name="Buhay C."/>
            <person name="Burch P."/>
            <person name="Burford D."/>
            <person name="Burgess J."/>
            <person name="Burrill W."/>
            <person name="Burton J."/>
            <person name="Bye J.M."/>
            <person name="Carder C."/>
            <person name="Carrel L."/>
            <person name="Chako J."/>
            <person name="Chapman J.C."/>
            <person name="Chavez D."/>
            <person name="Chen E."/>
            <person name="Chen G."/>
            <person name="Chen Y."/>
            <person name="Chen Z."/>
            <person name="Chinault C."/>
            <person name="Ciccodicola A."/>
            <person name="Clark S.Y."/>
            <person name="Clarke G."/>
            <person name="Clee C.M."/>
            <person name="Clegg S."/>
            <person name="Clerc-Blankenburg K."/>
            <person name="Clifford K."/>
            <person name="Cobley V."/>
            <person name="Cole C.G."/>
            <person name="Conquer J.S."/>
            <person name="Corby N."/>
            <person name="Connor R.E."/>
            <person name="David R."/>
            <person name="Davies J."/>
            <person name="Davis C."/>
            <person name="Davis J."/>
            <person name="Delgado O."/>
            <person name="Deshazo D."/>
            <person name="Dhami P."/>
            <person name="Ding Y."/>
            <person name="Dinh H."/>
            <person name="Dodsworth S."/>
            <person name="Draper H."/>
            <person name="Dugan-Rocha S."/>
            <person name="Dunham A."/>
            <person name="Dunn M."/>
            <person name="Durbin K.J."/>
            <person name="Dutta I."/>
            <person name="Eades T."/>
            <person name="Ellwood M."/>
            <person name="Emery-Cohen A."/>
            <person name="Errington H."/>
            <person name="Evans K.L."/>
            <person name="Faulkner L."/>
            <person name="Francis F."/>
            <person name="Frankland J."/>
            <person name="Fraser A.E."/>
            <person name="Galgoczy P."/>
            <person name="Gilbert J."/>
            <person name="Gill R."/>
            <person name="Gloeckner G."/>
            <person name="Gregory S.G."/>
            <person name="Gribble S."/>
            <person name="Griffiths C."/>
            <person name="Grocock R."/>
            <person name="Gu Y."/>
            <person name="Gwilliam R."/>
            <person name="Hamilton C."/>
            <person name="Hart E.A."/>
            <person name="Hawes A."/>
            <person name="Heath P.D."/>
            <person name="Heitmann K."/>
            <person name="Hennig S."/>
            <person name="Hernandez J."/>
            <person name="Hinzmann B."/>
            <person name="Ho S."/>
            <person name="Hoffs M."/>
            <person name="Howden P.J."/>
            <person name="Huckle E.J."/>
            <person name="Hume J."/>
            <person name="Hunt P.J."/>
            <person name="Hunt A.R."/>
            <person name="Isherwood J."/>
            <person name="Jacob L."/>
            <person name="Johnson D."/>
            <person name="Jones S."/>
            <person name="de Jong P.J."/>
            <person name="Joseph S.S."/>
            <person name="Keenan S."/>
            <person name="Kelly S."/>
            <person name="Kershaw J.K."/>
            <person name="Khan Z."/>
            <person name="Kioschis P."/>
            <person name="Klages S."/>
            <person name="Knights A.J."/>
            <person name="Kosiura A."/>
            <person name="Kovar-Smith C."/>
            <person name="Laird G.K."/>
            <person name="Langford C."/>
            <person name="Lawlor S."/>
            <person name="Leversha M."/>
            <person name="Lewis L."/>
            <person name="Liu W."/>
            <person name="Lloyd C."/>
            <person name="Lloyd D.M."/>
            <person name="Loulseged H."/>
            <person name="Loveland J.E."/>
            <person name="Lovell J.D."/>
            <person name="Lozado R."/>
            <person name="Lu J."/>
            <person name="Lyne R."/>
            <person name="Ma J."/>
            <person name="Maheshwari M."/>
            <person name="Matthews L.H."/>
            <person name="McDowall J."/>
            <person name="McLaren S."/>
            <person name="McMurray A."/>
            <person name="Meidl P."/>
            <person name="Meitinger T."/>
            <person name="Milne S."/>
            <person name="Miner G."/>
            <person name="Mistry S.L."/>
            <person name="Morgan M."/>
            <person name="Morris S."/>
            <person name="Mueller I."/>
            <person name="Mullikin J.C."/>
            <person name="Nguyen N."/>
            <person name="Nordsiek G."/>
            <person name="Nyakatura G."/>
            <person name="O'dell C.N."/>
            <person name="Okwuonu G."/>
            <person name="Palmer S."/>
            <person name="Pandian R."/>
            <person name="Parker D."/>
            <person name="Parrish J."/>
            <person name="Pasternak S."/>
            <person name="Patel D."/>
            <person name="Pearce A.V."/>
            <person name="Pearson D.M."/>
            <person name="Pelan S.E."/>
            <person name="Perez L."/>
            <person name="Porter K.M."/>
            <person name="Ramsey Y."/>
            <person name="Reichwald K."/>
            <person name="Rhodes S."/>
            <person name="Ridler K.A."/>
            <person name="Schlessinger D."/>
            <person name="Schueler M.G."/>
            <person name="Sehra H.K."/>
            <person name="Shaw-Smith C."/>
            <person name="Shen H."/>
            <person name="Sheridan E.M."/>
            <person name="Shownkeen R."/>
            <person name="Skuce C.D."/>
            <person name="Smith M.L."/>
            <person name="Sotheran E.C."/>
            <person name="Steingruber H.E."/>
            <person name="Steward C.A."/>
            <person name="Storey R."/>
            <person name="Swann R.M."/>
            <person name="Swarbreck D."/>
            <person name="Tabor P.E."/>
            <person name="Taudien S."/>
            <person name="Taylor T."/>
            <person name="Teague B."/>
            <person name="Thomas K."/>
            <person name="Thorpe A."/>
            <person name="Timms K."/>
            <person name="Tracey A."/>
            <person name="Trevanion S."/>
            <person name="Tromans A.C."/>
            <person name="d'Urso M."/>
            <person name="Verduzco D."/>
            <person name="Villasana D."/>
            <person name="Waldron L."/>
            <person name="Wall M."/>
            <person name="Wang Q."/>
            <person name="Warren J."/>
            <person name="Warry G.L."/>
            <person name="Wei X."/>
            <person name="West A."/>
            <person name="Whitehead S.L."/>
            <person name="Whiteley M.N."/>
            <person name="Wilkinson J.E."/>
            <person name="Willey D.L."/>
            <person name="Williams G."/>
            <person name="Williams L."/>
            <person name="Williamson A."/>
            <person name="Williamson H."/>
            <person name="Wilming L."/>
            <person name="Woodmansey R.L."/>
            <person name="Wray P.W."/>
            <person name="Yen J."/>
            <person name="Zhang J."/>
            <person name="Zhou J."/>
            <person name="Zoghbi H."/>
            <person name="Zorilla S."/>
            <person name="Buck D."/>
            <person name="Reinhardt R."/>
            <person name="Poustka A."/>
            <person name="Rosenthal A."/>
            <person name="Lehrach H."/>
            <person name="Meindl A."/>
            <person name="Minx P.J."/>
            <person name="Hillier L.W."/>
            <person name="Willard H.F."/>
            <person name="Wilson R.K."/>
            <person name="Waterston R.H."/>
            <person name="Rice C.M."/>
            <person name="Vaudin M."/>
            <person name="Coulson A."/>
            <person name="Nelson D.L."/>
            <person name="Weinstock G."/>
            <person name="Sulston J.E."/>
            <person name="Durbin R.M."/>
            <person name="Hubbard T."/>
            <person name="Gibbs R.A."/>
            <person name="Beck S."/>
            <person name="Rogers J."/>
            <person name="Bentley D.R."/>
        </authorList>
    </citation>
    <scope>NUCLEOTIDE SEQUENCE [LARGE SCALE GENOMIC DNA]</scope>
</reference>
<reference key="2">
    <citation type="submission" date="2005-09" db="EMBL/GenBank/DDBJ databases">
        <authorList>
            <person name="Mural R.J."/>
            <person name="Istrail S."/>
            <person name="Sutton G.G."/>
            <person name="Florea L."/>
            <person name="Halpern A.L."/>
            <person name="Mobarry C.M."/>
            <person name="Lippert R."/>
            <person name="Walenz B."/>
            <person name="Shatkay H."/>
            <person name="Dew I."/>
            <person name="Miller J.R."/>
            <person name="Flanigan M.J."/>
            <person name="Edwards N.J."/>
            <person name="Bolanos R."/>
            <person name="Fasulo D."/>
            <person name="Halldorsson B.V."/>
            <person name="Hannenhalli S."/>
            <person name="Turner R."/>
            <person name="Yooseph S."/>
            <person name="Lu F."/>
            <person name="Nusskern D.R."/>
            <person name="Shue B.C."/>
            <person name="Zheng X.H."/>
            <person name="Zhong F."/>
            <person name="Delcher A.L."/>
            <person name="Huson D.H."/>
            <person name="Kravitz S.A."/>
            <person name="Mouchard L."/>
            <person name="Reinert K."/>
            <person name="Remington K.A."/>
            <person name="Clark A.G."/>
            <person name="Waterman M.S."/>
            <person name="Eichler E.E."/>
            <person name="Adams M.D."/>
            <person name="Hunkapiller M.W."/>
            <person name="Myers E.W."/>
            <person name="Venter J.C."/>
        </authorList>
    </citation>
    <scope>NUCLEOTIDE SEQUENCE [LARGE SCALE GENOMIC DNA]</scope>
</reference>
<reference key="3">
    <citation type="journal article" date="2004" name="Genome Res.">
        <title>The status, quality, and expansion of the NIH full-length cDNA project: the Mammalian Gene Collection (MGC).</title>
        <authorList>
            <consortium name="The MGC Project Team"/>
        </authorList>
    </citation>
    <scope>NUCLEOTIDE SEQUENCE [LARGE SCALE MRNA]</scope>
</reference>
<keyword id="KW-1267">Proteomics identification</keyword>
<keyword id="KW-1185">Reference proteome</keyword>
<accession>A6NMA1</accession>
<name>TR5OS_HUMAN</name>
<proteinExistence type="evidence at protein level"/>
<comment type="caution">
    <text evidence="2">Encoded in an intron of the TRPC5 gene (opposite strand). May be a non-coding RNA.</text>
</comment>
<gene>
    <name type="primary">TRPC5OS</name>
    <name type="synonym">TRPC5-AS1</name>
</gene>
<protein>
    <recommendedName>
        <fullName>Putative uncharacterized protein TRPC5OS</fullName>
    </recommendedName>
    <alternativeName>
        <fullName>TRPC5 opposite strand protein</fullName>
    </alternativeName>
    <alternativeName>
        <fullName>TRPC5-antisense RNA 1</fullName>
    </alternativeName>
</protein>
<evidence type="ECO:0000256" key="1">
    <source>
        <dbReference type="SAM" id="MobiDB-lite"/>
    </source>
</evidence>
<evidence type="ECO:0000305" key="2"/>
<organism>
    <name type="scientific">Homo sapiens</name>
    <name type="common">Human</name>
    <dbReference type="NCBI Taxonomy" id="9606"/>
    <lineage>
        <taxon>Eukaryota</taxon>
        <taxon>Metazoa</taxon>
        <taxon>Chordata</taxon>
        <taxon>Craniata</taxon>
        <taxon>Vertebrata</taxon>
        <taxon>Euteleostomi</taxon>
        <taxon>Mammalia</taxon>
        <taxon>Eutheria</taxon>
        <taxon>Euarchontoglires</taxon>
        <taxon>Primates</taxon>
        <taxon>Haplorrhini</taxon>
        <taxon>Catarrhini</taxon>
        <taxon>Hominidae</taxon>
        <taxon>Homo</taxon>
    </lineage>
</organism>
<sequence>MDSVLIHVLIDGLVACVAQLIRIADELLQFILQVQEVPYVEENGRAEETEADAPLPEEPSLPDLPDLSDLDSILTPREDEDLIFDIDQAMLDMDNLYEDTVSGINDDLTGD</sequence>
<feature type="chain" id="PRO_0000349178" description="Putative uncharacterized protein TRPC5OS">
    <location>
        <begin position="1"/>
        <end position="111"/>
    </location>
</feature>
<feature type="region of interest" description="Disordered" evidence="1">
    <location>
        <begin position="43"/>
        <end position="72"/>
    </location>
</feature>
<feature type="compositionally biased region" description="Low complexity" evidence="1">
    <location>
        <begin position="61"/>
        <end position="72"/>
    </location>
</feature>